<organism>
    <name type="scientific">Brevibacillus brevis</name>
    <name type="common">Bacillus brevis</name>
    <dbReference type="NCBI Taxonomy" id="1393"/>
    <lineage>
        <taxon>Bacteria</taxon>
        <taxon>Bacillati</taxon>
        <taxon>Bacillota</taxon>
        <taxon>Bacilli</taxon>
        <taxon>Bacillales</taxon>
        <taxon>Paenibacillaceae</taxon>
        <taxon>Brevibacillus</taxon>
    </lineage>
</organism>
<reference key="1">
    <citation type="journal article" date="1994" name="Appl. Microbiol. Biotechnol.">
        <title>Cloning and sequencing the degS-degU operon from an alkalophilic Bacillus brevis.</title>
        <authorList>
            <person name="Louw M.E."/>
            <person name="Reid S.J."/>
            <person name="James M.D."/>
            <person name="Watson T.G."/>
        </authorList>
    </citation>
    <scope>NUCLEOTIDE SEQUENCE [GENOMIC DNA]</scope>
    <source>
        <strain>Alk36</strain>
    </source>
</reference>
<name>DEGS_BREBE</name>
<evidence type="ECO:0000250" key="1"/>
<evidence type="ECO:0000255" key="2">
    <source>
        <dbReference type="PROSITE-ProRule" id="PRU00107"/>
    </source>
</evidence>
<protein>
    <recommendedName>
        <fullName>Signal transduction histidine-protein kinase/phosphatase DegS</fullName>
        <ecNumber>2.7.13.3</ecNumber>
        <ecNumber>3.1.3.-</ecNumber>
    </recommendedName>
</protein>
<gene>
    <name type="primary">degS</name>
</gene>
<feature type="chain" id="PRO_0000074755" description="Signal transduction histidine-protein kinase/phosphatase DegS">
    <location>
        <begin position="1"/>
        <end position="386"/>
    </location>
</feature>
<feature type="domain" description="Histidine kinase" evidence="2">
    <location>
        <begin position="188"/>
        <end position="384"/>
    </location>
</feature>
<feature type="modified residue" description="Phosphohistidine; by autocatalysis" evidence="2">
    <location>
        <position position="194"/>
    </location>
</feature>
<keyword id="KW-0067">ATP-binding</keyword>
<keyword id="KW-0963">Cytoplasm</keyword>
<keyword id="KW-0378">Hydrolase</keyword>
<keyword id="KW-0418">Kinase</keyword>
<keyword id="KW-0547">Nucleotide-binding</keyword>
<keyword id="KW-0597">Phosphoprotein</keyword>
<keyword id="KW-0904">Protein phosphatase</keyword>
<keyword id="KW-0808">Transferase</keyword>
<keyword id="KW-0902">Two-component regulatory system</keyword>
<sequence>MPFKGLVVQVADPQTLDKIIDKTLDTVGKSREQIFEISEQSRNEYVSLEQELQEVRMKVAEIIDQSDRAEVHARFARNRLAEVSKQFHRYSNEEIRKVYEQANELQVKLALLQQEEQQLRDRRDAIERRLLNLKDTIERAEELVGQMTVVYNFLTGDLRQVGEALEDAREKQAFGLQIIQAQEEERRKLSREIHDGPAQMMANVLLRSELVERIYHDKGIDEALKEIRDLRKMVKSSLAEVRRIIYDLRRMALDDLGLIPTLKKYVKTFEEHTGIFVDFKHIGKGERFPEHVEIALFRLVQEALQNTRKHAKASHVHVKIEEQKTKFTVVIKDNGKGFDQTEKKEGSFGLVGMKERVNMLKGQLVIRTKPNDGTTIIISIPITTEE</sequence>
<proteinExistence type="inferred from homology"/>
<accession>P54663</accession>
<dbReference type="EC" id="2.7.13.3"/>
<dbReference type="EC" id="3.1.3.-"/>
<dbReference type="EMBL" id="L15444">
    <property type="protein sequence ID" value="AAC41438.1"/>
    <property type="molecule type" value="Genomic_DNA"/>
</dbReference>
<dbReference type="PIR" id="I39834">
    <property type="entry name" value="I39834"/>
</dbReference>
<dbReference type="SMR" id="P54663"/>
<dbReference type="BRENDA" id="2.7.13.3">
    <property type="organism ID" value="638"/>
</dbReference>
<dbReference type="GO" id="GO:0005737">
    <property type="term" value="C:cytoplasm"/>
    <property type="evidence" value="ECO:0007669"/>
    <property type="project" value="UniProtKB-SubCell"/>
</dbReference>
<dbReference type="GO" id="GO:0016020">
    <property type="term" value="C:membrane"/>
    <property type="evidence" value="ECO:0007669"/>
    <property type="project" value="InterPro"/>
</dbReference>
<dbReference type="GO" id="GO:0005524">
    <property type="term" value="F:ATP binding"/>
    <property type="evidence" value="ECO:0007669"/>
    <property type="project" value="UniProtKB-KW"/>
</dbReference>
<dbReference type="GO" id="GO:0004721">
    <property type="term" value="F:phosphoprotein phosphatase activity"/>
    <property type="evidence" value="ECO:0007669"/>
    <property type="project" value="UniProtKB-KW"/>
</dbReference>
<dbReference type="GO" id="GO:0000155">
    <property type="term" value="F:phosphorelay sensor kinase activity"/>
    <property type="evidence" value="ECO:0007669"/>
    <property type="project" value="InterPro"/>
</dbReference>
<dbReference type="GO" id="GO:0046983">
    <property type="term" value="F:protein dimerization activity"/>
    <property type="evidence" value="ECO:0007669"/>
    <property type="project" value="InterPro"/>
</dbReference>
<dbReference type="CDD" id="cd16917">
    <property type="entry name" value="HATPase_UhpB-NarQ-NarX-like"/>
    <property type="match status" value="1"/>
</dbReference>
<dbReference type="Gene3D" id="1.20.5.1930">
    <property type="match status" value="1"/>
</dbReference>
<dbReference type="Gene3D" id="3.30.565.10">
    <property type="entry name" value="Histidine kinase-like ATPase, C-terminal domain"/>
    <property type="match status" value="1"/>
</dbReference>
<dbReference type="InterPro" id="IPR008595">
    <property type="entry name" value="DegS"/>
</dbReference>
<dbReference type="InterPro" id="IPR036890">
    <property type="entry name" value="HATPase_C_sf"/>
</dbReference>
<dbReference type="InterPro" id="IPR005467">
    <property type="entry name" value="His_kinase_dom"/>
</dbReference>
<dbReference type="InterPro" id="IPR050482">
    <property type="entry name" value="Sensor_HK_TwoCompSys"/>
</dbReference>
<dbReference type="InterPro" id="IPR011712">
    <property type="entry name" value="Sig_transdc_His_kin_sub3_dim/P"/>
</dbReference>
<dbReference type="InterPro" id="IPR016381">
    <property type="entry name" value="Sig_transdc_His_kinase_DegS"/>
</dbReference>
<dbReference type="PANTHER" id="PTHR24421">
    <property type="entry name" value="NITRATE/NITRITE SENSOR PROTEIN NARX-RELATED"/>
    <property type="match status" value="1"/>
</dbReference>
<dbReference type="PANTHER" id="PTHR24421:SF55">
    <property type="entry name" value="SENSOR HISTIDINE KINASE YDFH"/>
    <property type="match status" value="1"/>
</dbReference>
<dbReference type="Pfam" id="PF05384">
    <property type="entry name" value="DegS"/>
    <property type="match status" value="1"/>
</dbReference>
<dbReference type="Pfam" id="PF02518">
    <property type="entry name" value="HATPase_c"/>
    <property type="match status" value="1"/>
</dbReference>
<dbReference type="Pfam" id="PF07730">
    <property type="entry name" value="HisKA_3"/>
    <property type="match status" value="1"/>
</dbReference>
<dbReference type="PIRSF" id="PIRSF003169">
    <property type="entry name" value="STHK_DegS"/>
    <property type="match status" value="1"/>
</dbReference>
<dbReference type="SMART" id="SM00387">
    <property type="entry name" value="HATPase_c"/>
    <property type="match status" value="1"/>
</dbReference>
<dbReference type="SUPFAM" id="SSF55874">
    <property type="entry name" value="ATPase domain of HSP90 chaperone/DNA topoisomerase II/histidine kinase"/>
    <property type="match status" value="1"/>
</dbReference>
<dbReference type="PROSITE" id="PS50109">
    <property type="entry name" value="HIS_KIN"/>
    <property type="match status" value="1"/>
</dbReference>
<comment type="function">
    <text evidence="1">Member of the two-component regulatory system DegS/DegU, which plays an important role in the transition growth phase. Acts as both a protein kinase that undergoes autophosphorylation and subsequently transfers the phosphate to DegU, and a protein phosphatase that dephosphorylates phospho-DegU (By similarity).</text>
</comment>
<comment type="catalytic activity">
    <reaction>
        <text>ATP + protein L-histidine = ADP + protein N-phospho-L-histidine.</text>
        <dbReference type="EC" id="2.7.13.3"/>
    </reaction>
</comment>
<comment type="subcellular location">
    <subcellularLocation>
        <location evidence="1">Cytoplasm</location>
    </subcellularLocation>
</comment>
<comment type="PTM">
    <text evidence="1">Autophosphorylated.</text>
</comment>